<sequence>MVAVRWGRKGLRSQRRKYSRIAYKPPSSKVVSHVESVLNKRDVTGAEVKPFADGSRYSMKKVMLIATLTMAPGELVNYLIVKSNSPIANWSSSFSNPSLMVKESVQDTVTIVGGGKLESSGTAGKDVTKSFRKFVKLGSGISQTQHLYLIIYSSDAMKITLETRMYIDV</sequence>
<dbReference type="EMBL" id="U16734">
    <property type="protein sequence ID" value="AAA68021.1"/>
    <property type="molecule type" value="Genomic_DNA"/>
</dbReference>
<dbReference type="SMR" id="Q87012"/>
<dbReference type="Proteomes" id="UP001515400">
    <property type="component" value="Genome"/>
</dbReference>
<dbReference type="GO" id="GO:0039615">
    <property type="term" value="C:T=1 icosahedral viral capsid"/>
    <property type="evidence" value="ECO:0007669"/>
    <property type="project" value="UniProtKB-KW"/>
</dbReference>
<dbReference type="InterPro" id="IPR006753">
    <property type="entry name" value="Nanovirus_coat"/>
</dbReference>
<dbReference type="Pfam" id="PF04660">
    <property type="entry name" value="Nanovirus_coat"/>
    <property type="match status" value="1"/>
</dbReference>
<protein>
    <recommendedName>
        <fullName>Capsid protein</fullName>
        <shortName>CP</shortName>
    </recommendedName>
    <alternativeName>
        <fullName>Coat protein</fullName>
    </alternativeName>
</protein>
<reference key="1">
    <citation type="journal article" date="1995" name="Virology">
        <title>Sequence of subterranean clover stunt virus DNA: affinities with the geminiviruses.</title>
        <authorList>
            <person name="Boevink P.C."/>
            <person name="Chu P.W.G."/>
            <person name="Keese P.K."/>
        </authorList>
    </citation>
    <scope>NUCLEOTIDE SEQUENCE [GENOMIC DNA]</scope>
</reference>
<evidence type="ECO:0000305" key="1"/>
<proteinExistence type="inferred from homology"/>
<gene>
    <name type="primary">DNA-S</name>
    <name type="synonym">C5</name>
</gene>
<feature type="chain" id="PRO_0000222437" description="Capsid protein">
    <location>
        <begin position="1"/>
        <end position="169"/>
    </location>
</feature>
<keyword id="KW-0167">Capsid protein</keyword>
<keyword id="KW-1185">Reference proteome</keyword>
<keyword id="KW-1140">T=1 icosahedral capsid protein</keyword>
<keyword id="KW-0946">Virion</keyword>
<accession>Q87012</accession>
<comment type="subcellular location">
    <subcellularLocation>
        <location evidence="1">Virion</location>
    </subcellularLocation>
</comment>
<comment type="similarity">
    <text evidence="1">Belongs to the nanoviridae capsid protein family.</text>
</comment>
<name>CAPSD_SCSVF</name>
<organism>
    <name type="scientific">Subterranean clover stunt virus (strain F)</name>
    <name type="common">SCSV</name>
    <dbReference type="NCBI Taxonomy" id="291607"/>
    <lineage>
        <taxon>Viruses</taxon>
        <taxon>Monodnaviria</taxon>
        <taxon>Shotokuvirae</taxon>
        <taxon>Cressdnaviricota</taxon>
        <taxon>Arfiviricetes</taxon>
        <taxon>Mulpavirales</taxon>
        <taxon>Nanoviridae</taxon>
        <taxon>Nanovirus</taxon>
        <taxon>Subterranean clover stunt virus</taxon>
    </lineage>
</organism>
<organismHost>
    <name type="scientific">Trifolium subterraneum</name>
    <name type="common">Subterranean clover</name>
    <dbReference type="NCBI Taxonomy" id="3900"/>
</organismHost>